<feature type="chain" id="PRO_0000046607" description="CD209 antigen-like protein D">
    <location>
        <begin position="1"/>
        <end position="237"/>
    </location>
</feature>
<feature type="topological domain" description="Cytoplasmic" evidence="2">
    <location>
        <begin position="1"/>
        <end position="54"/>
    </location>
</feature>
<feature type="transmembrane region" description="Helical; Signal-anchor for type II membrane protein" evidence="2">
    <location>
        <begin position="55"/>
        <end position="75"/>
    </location>
</feature>
<feature type="topological domain" description="Extracellular" evidence="2">
    <location>
        <begin position="76"/>
        <end position="237"/>
    </location>
</feature>
<feature type="domain" description="C-type lectin" evidence="3">
    <location>
        <begin position="112"/>
        <end position="227"/>
    </location>
</feature>
<feature type="binding site" evidence="1">
    <location>
        <position position="196"/>
    </location>
    <ligand>
        <name>Ca(2+)</name>
        <dbReference type="ChEBI" id="CHEBI:29108"/>
    </ligand>
</feature>
<feature type="binding site" evidence="1">
    <location>
        <position position="198"/>
    </location>
    <ligand>
        <name>Ca(2+)</name>
        <dbReference type="ChEBI" id="CHEBI:29108"/>
    </ligand>
</feature>
<feature type="binding site" evidence="1">
    <location>
        <position position="203"/>
    </location>
    <ligand>
        <name>Ca(2+)</name>
        <dbReference type="ChEBI" id="CHEBI:29108"/>
    </ligand>
</feature>
<feature type="binding site" evidence="1">
    <location>
        <position position="214"/>
    </location>
    <ligand>
        <name>Ca(2+)</name>
        <dbReference type="ChEBI" id="CHEBI:29108"/>
    </ligand>
</feature>
<feature type="binding site" evidence="1">
    <location>
        <position position="215"/>
    </location>
    <ligand>
        <name>Ca(2+)</name>
        <dbReference type="ChEBI" id="CHEBI:29108"/>
    </ligand>
</feature>
<feature type="glycosylation site" description="N-linked (GlcNAc...) asparagine" evidence="2">
    <location>
        <position position="114"/>
    </location>
</feature>
<feature type="glycosylation site" description="N-linked (GlcNAc...) asparagine" evidence="2">
    <location>
        <position position="129"/>
    </location>
</feature>
<feature type="disulfide bond" evidence="3">
    <location>
        <begin position="106"/>
        <end position="117"/>
    </location>
</feature>
<feature type="disulfide bond" evidence="3">
    <location>
        <begin position="134"/>
        <end position="226"/>
    </location>
</feature>
<feature type="disulfide bond" evidence="3">
    <location>
        <begin position="205"/>
        <end position="218"/>
    </location>
</feature>
<feature type="splice variant" id="VSP_010071" description="In isoform 2." evidence="4">
    <location>
        <begin position="45"/>
        <end position="74"/>
    </location>
</feature>
<keyword id="KW-0025">Alternative splicing</keyword>
<keyword id="KW-0106">Calcium</keyword>
<keyword id="KW-1015">Disulfide bond</keyword>
<keyword id="KW-0254">Endocytosis</keyword>
<keyword id="KW-0325">Glycoprotein</keyword>
<keyword id="KW-0430">Lectin</keyword>
<keyword id="KW-0465">Mannose-binding</keyword>
<keyword id="KW-0472">Membrane</keyword>
<keyword id="KW-0479">Metal-binding</keyword>
<keyword id="KW-0675">Receptor</keyword>
<keyword id="KW-1185">Reference proteome</keyword>
<keyword id="KW-0735">Signal-anchor</keyword>
<keyword id="KW-0812">Transmembrane</keyword>
<keyword id="KW-1133">Transmembrane helix</keyword>
<name>C209D_MOUSE</name>
<dbReference type="EMBL" id="AF373411">
    <property type="protein sequence ID" value="AAL13237.1"/>
    <property type="molecule type" value="mRNA"/>
</dbReference>
<dbReference type="EMBL" id="AF440280">
    <property type="protein sequence ID" value="AAL33584.1"/>
    <property type="molecule type" value="mRNA"/>
</dbReference>
<dbReference type="CCDS" id="CCDS22075.1">
    <molecule id="Q91ZW8-1"/>
</dbReference>
<dbReference type="RefSeq" id="NP_570974.1">
    <molecule id="Q91ZW8-1"/>
    <property type="nucleotide sequence ID" value="NM_130904.2"/>
</dbReference>
<dbReference type="SMR" id="Q91ZW8"/>
<dbReference type="FunCoup" id="Q91ZW8">
    <property type="interactions" value="359"/>
</dbReference>
<dbReference type="STRING" id="10090.ENSMUSP00000011445"/>
<dbReference type="GlyCosmos" id="Q91ZW8">
    <property type="glycosylation" value="2 sites, No reported glycans"/>
</dbReference>
<dbReference type="GlyGen" id="Q91ZW8">
    <property type="glycosylation" value="2 sites"/>
</dbReference>
<dbReference type="PaxDb" id="10090-ENSMUSP00000011445"/>
<dbReference type="ProteomicsDB" id="265404">
    <molecule id="Q91ZW8-1"/>
</dbReference>
<dbReference type="ProteomicsDB" id="265405">
    <molecule id="Q91ZW8-2"/>
</dbReference>
<dbReference type="DNASU" id="170779"/>
<dbReference type="Ensembl" id="ENSMUST00000011445.8">
    <molecule id="Q91ZW8-1"/>
    <property type="protein sequence ID" value="ENSMUSP00000011445.7"/>
    <property type="gene ID" value="ENSMUSG00000031495.9"/>
</dbReference>
<dbReference type="Ensembl" id="ENSMUST00000209176.2">
    <molecule id="Q91ZW8-2"/>
    <property type="protein sequence ID" value="ENSMUSP00000147198.2"/>
    <property type="gene ID" value="ENSMUSG00000031495.9"/>
</dbReference>
<dbReference type="GeneID" id="170779"/>
<dbReference type="KEGG" id="mmu:170779"/>
<dbReference type="UCSC" id="uc009kst.1">
    <molecule id="Q91ZW8-1"/>
    <property type="organism name" value="mouse"/>
</dbReference>
<dbReference type="UCSC" id="uc012fyv.1">
    <molecule id="Q91ZW8-2"/>
    <property type="organism name" value="mouse"/>
</dbReference>
<dbReference type="AGR" id="MGI:2157947"/>
<dbReference type="CTD" id="170779"/>
<dbReference type="MGI" id="MGI:2157947">
    <property type="gene designation" value="Cd209d"/>
</dbReference>
<dbReference type="VEuPathDB" id="HostDB:ENSMUSG00000031495"/>
<dbReference type="eggNOG" id="KOG4297">
    <property type="taxonomic scope" value="Eukaryota"/>
</dbReference>
<dbReference type="GeneTree" id="ENSGT00940000155012"/>
<dbReference type="HOGENOM" id="CLU_049894_7_3_1"/>
<dbReference type="InParanoid" id="Q91ZW8"/>
<dbReference type="OMA" id="WNDQECA"/>
<dbReference type="OrthoDB" id="8950604at2759"/>
<dbReference type="PhylomeDB" id="Q91ZW8"/>
<dbReference type="TreeFam" id="TF333341"/>
<dbReference type="BioGRID-ORCS" id="170779">
    <property type="hits" value="2 hits in 77 CRISPR screens"/>
</dbReference>
<dbReference type="PRO" id="PR:Q91ZW8"/>
<dbReference type="Proteomes" id="UP000000589">
    <property type="component" value="Chromosome 8"/>
</dbReference>
<dbReference type="RNAct" id="Q91ZW8">
    <property type="molecule type" value="protein"/>
</dbReference>
<dbReference type="Bgee" id="ENSMUSG00000031495">
    <property type="expression patterns" value="Expressed in epiblast cell in embryo and 35 other cell types or tissues"/>
</dbReference>
<dbReference type="ExpressionAtlas" id="Q91ZW8">
    <property type="expression patterns" value="baseline and differential"/>
</dbReference>
<dbReference type="GO" id="GO:0016020">
    <property type="term" value="C:membrane"/>
    <property type="evidence" value="ECO:0000250"/>
    <property type="project" value="MGI"/>
</dbReference>
<dbReference type="GO" id="GO:0005537">
    <property type="term" value="F:D-mannose binding"/>
    <property type="evidence" value="ECO:0000314"/>
    <property type="project" value="MGI"/>
</dbReference>
<dbReference type="GO" id="GO:0042802">
    <property type="term" value="F:identical protein binding"/>
    <property type="evidence" value="ECO:0000353"/>
    <property type="project" value="MGI"/>
</dbReference>
<dbReference type="GO" id="GO:0046872">
    <property type="term" value="F:metal ion binding"/>
    <property type="evidence" value="ECO:0007669"/>
    <property type="project" value="UniProtKB-KW"/>
</dbReference>
<dbReference type="GO" id="GO:0042742">
    <property type="term" value="P:defense response to bacterium"/>
    <property type="evidence" value="ECO:0000315"/>
    <property type="project" value="MGI"/>
</dbReference>
<dbReference type="GO" id="GO:0006897">
    <property type="term" value="P:endocytosis"/>
    <property type="evidence" value="ECO:0000314"/>
    <property type="project" value="MGI"/>
</dbReference>
<dbReference type="GO" id="GO:0001819">
    <property type="term" value="P:positive regulation of cytokine production"/>
    <property type="evidence" value="ECO:0000314"/>
    <property type="project" value="MGI"/>
</dbReference>
<dbReference type="CDD" id="cd03590">
    <property type="entry name" value="CLECT_DC-SIGN_like"/>
    <property type="match status" value="1"/>
</dbReference>
<dbReference type="FunFam" id="3.10.100.10:FF:000044">
    <property type="entry name" value="CD209 antigen, isoform CRA_b"/>
    <property type="match status" value="1"/>
</dbReference>
<dbReference type="Gene3D" id="3.10.100.10">
    <property type="entry name" value="Mannose-Binding Protein A, subunit A"/>
    <property type="match status" value="1"/>
</dbReference>
<dbReference type="InterPro" id="IPR001304">
    <property type="entry name" value="C-type_lectin-like"/>
</dbReference>
<dbReference type="InterPro" id="IPR016186">
    <property type="entry name" value="C-type_lectin-like/link_sf"/>
</dbReference>
<dbReference type="InterPro" id="IPR050111">
    <property type="entry name" value="C-type_lectin/snaclec_domain"/>
</dbReference>
<dbReference type="InterPro" id="IPR018378">
    <property type="entry name" value="C-type_lectin_CS"/>
</dbReference>
<dbReference type="InterPro" id="IPR033989">
    <property type="entry name" value="CD209-like_CTLD"/>
</dbReference>
<dbReference type="InterPro" id="IPR016187">
    <property type="entry name" value="CTDL_fold"/>
</dbReference>
<dbReference type="PANTHER" id="PTHR22803">
    <property type="entry name" value="MANNOSE, PHOSPHOLIPASE, LECTIN RECEPTOR RELATED"/>
    <property type="match status" value="1"/>
</dbReference>
<dbReference type="Pfam" id="PF00059">
    <property type="entry name" value="Lectin_C"/>
    <property type="match status" value="1"/>
</dbReference>
<dbReference type="SMART" id="SM00034">
    <property type="entry name" value="CLECT"/>
    <property type="match status" value="1"/>
</dbReference>
<dbReference type="SUPFAM" id="SSF56436">
    <property type="entry name" value="C-type lectin-like"/>
    <property type="match status" value="1"/>
</dbReference>
<dbReference type="PROSITE" id="PS00615">
    <property type="entry name" value="C_TYPE_LECTIN_1"/>
    <property type="match status" value="1"/>
</dbReference>
<dbReference type="PROSITE" id="PS50041">
    <property type="entry name" value="C_TYPE_LECTIN_2"/>
    <property type="match status" value="1"/>
</dbReference>
<sequence>MSDSMESKTQQVVIPEDEECLMSGTRYSDISSRLQTKFGIKSLAEYTKQSRNPLVLQLLSFLFLAGLLLIILILVSKVPSSEVQNKIYQELMQLKAEVHDGLCQPCARDWTFFNGSCYFFSKSQRNWHNSTTACQELGAQLVIIETDEEQTFLQQTSKARGPTWMGLSDMHNEATWHWVDGSPLSPSFTRYWNRGEPNNVGDEDCAEFSGDGWNDLSCDKLLFWICKKVSTSSCTTK</sequence>
<accession>Q91ZW8</accession>
<accession>Q8VIK4</accession>
<organism>
    <name type="scientific">Mus musculus</name>
    <name type="common">Mouse</name>
    <dbReference type="NCBI Taxonomy" id="10090"/>
    <lineage>
        <taxon>Eukaryota</taxon>
        <taxon>Metazoa</taxon>
        <taxon>Chordata</taxon>
        <taxon>Craniata</taxon>
        <taxon>Vertebrata</taxon>
        <taxon>Euteleostomi</taxon>
        <taxon>Mammalia</taxon>
        <taxon>Eutheria</taxon>
        <taxon>Euarchontoglires</taxon>
        <taxon>Glires</taxon>
        <taxon>Rodentia</taxon>
        <taxon>Myomorpha</taxon>
        <taxon>Muroidea</taxon>
        <taxon>Muridae</taxon>
        <taxon>Murinae</taxon>
        <taxon>Mus</taxon>
        <taxon>Mus</taxon>
    </lineage>
</organism>
<gene>
    <name type="primary">Cd209d</name>
</gene>
<reference key="1">
    <citation type="journal article" date="2001" name="Int. Immunol.">
        <title>Five mouse homologues of the human dendritic cell C-type lectin, DC-SIGN.</title>
        <authorList>
            <person name="Park C.G."/>
            <person name="Takahara K."/>
            <person name="Umemoto E."/>
            <person name="Yashima Y."/>
            <person name="Matsubara K."/>
            <person name="Matsuda Y."/>
            <person name="Clausen B.E."/>
            <person name="Inaba K."/>
            <person name="Steinman R.M."/>
        </authorList>
    </citation>
    <scope>NUCLEOTIDE SEQUENCE [MRNA] (ISOFORMS 1 AND 2)</scope>
    <source>
        <strain>C57BL/6J</strain>
    </source>
</reference>
<comment type="function">
    <text>Probable pathogen-recognition receptor. May mediate the endocytosis of pathogens which are subsequently degraded in lysosomal compartments. May recognize in a calcium-dependent manner high mannose N-linked oligosaccharides in a variety of pathogen antigens.</text>
</comment>
<comment type="subcellular location">
    <subcellularLocation>
        <location evidence="5">Membrane</location>
        <topology evidence="5">Single-pass type II membrane protein</topology>
    </subcellularLocation>
</comment>
<comment type="alternative products">
    <event type="alternative splicing"/>
    <isoform>
        <id>Q91ZW8-1</id>
        <name>1</name>
        <sequence type="displayed"/>
    </isoform>
    <isoform>
        <id>Q91ZW8-2</id>
        <name>2</name>
        <sequence type="described" ref="VSP_010071"/>
    </isoform>
</comment>
<comment type="caution">
    <text evidence="5">In mouse, 5 genes homologous to human CD209/DC-SIGN and CD209L/DC-SIGNR have been identified.</text>
</comment>
<comment type="online information" name="Functional Glycomics Gateway - Glycan Binding">
    <link uri="http://www.functionalglycomics.org/glycomics/GBPServlet?&amp;operationType=view&amp;cbpId=cbp_mou_Ctlect_00132"/>
    <text>SIGNR3</text>
</comment>
<proteinExistence type="evidence at transcript level"/>
<evidence type="ECO:0000250" key="1"/>
<evidence type="ECO:0000255" key="2"/>
<evidence type="ECO:0000255" key="3">
    <source>
        <dbReference type="PROSITE-ProRule" id="PRU00040"/>
    </source>
</evidence>
<evidence type="ECO:0000303" key="4">
    <source>
    </source>
</evidence>
<evidence type="ECO:0000305" key="5"/>
<protein>
    <recommendedName>
        <fullName>CD209 antigen-like protein D</fullName>
    </recommendedName>
    <alternativeName>
        <fullName>DC-SIGN-related protein 3</fullName>
        <shortName>DC-SIGNR3</shortName>
    </alternativeName>
    <cdAntigenName>CD209</cdAntigenName>
</protein>